<feature type="chain" id="PRO_1000205252" description="ATP-dependent 6-phosphofructokinase">
    <location>
        <begin position="1"/>
        <end position="320"/>
    </location>
</feature>
<feature type="active site" description="Proton acceptor" evidence="1">
    <location>
        <position position="128"/>
    </location>
</feature>
<feature type="binding site" evidence="1">
    <location>
        <position position="12"/>
    </location>
    <ligand>
        <name>ATP</name>
        <dbReference type="ChEBI" id="CHEBI:30616"/>
    </ligand>
</feature>
<feature type="binding site" evidence="1">
    <location>
        <begin position="22"/>
        <end position="26"/>
    </location>
    <ligand>
        <name>ADP</name>
        <dbReference type="ChEBI" id="CHEBI:456216"/>
        <note>allosteric activator; ligand shared between dimeric partners</note>
    </ligand>
</feature>
<feature type="binding site" evidence="1">
    <location>
        <begin position="73"/>
        <end position="74"/>
    </location>
    <ligand>
        <name>ATP</name>
        <dbReference type="ChEBI" id="CHEBI:30616"/>
    </ligand>
</feature>
<feature type="binding site" evidence="1">
    <location>
        <begin position="103"/>
        <end position="106"/>
    </location>
    <ligand>
        <name>ATP</name>
        <dbReference type="ChEBI" id="CHEBI:30616"/>
    </ligand>
</feature>
<feature type="binding site" evidence="1">
    <location>
        <position position="104"/>
    </location>
    <ligand>
        <name>Mg(2+)</name>
        <dbReference type="ChEBI" id="CHEBI:18420"/>
        <note>catalytic</note>
    </ligand>
</feature>
<feature type="binding site" description="in other chain" evidence="1">
    <location>
        <begin position="126"/>
        <end position="128"/>
    </location>
    <ligand>
        <name>substrate</name>
        <note>ligand shared between dimeric partners</note>
    </ligand>
</feature>
<feature type="binding site" description="in other chain" evidence="1">
    <location>
        <position position="155"/>
    </location>
    <ligand>
        <name>ADP</name>
        <dbReference type="ChEBI" id="CHEBI:456216"/>
        <note>allosteric activator; ligand shared between dimeric partners</note>
    </ligand>
</feature>
<feature type="binding site" evidence="1">
    <location>
        <position position="163"/>
    </location>
    <ligand>
        <name>substrate</name>
        <note>ligand shared between dimeric partners</note>
    </ligand>
</feature>
<feature type="binding site" description="in other chain" evidence="1">
    <location>
        <begin position="170"/>
        <end position="172"/>
    </location>
    <ligand>
        <name>substrate</name>
        <note>ligand shared between dimeric partners</note>
    </ligand>
</feature>
<feature type="binding site" description="in other chain" evidence="1">
    <location>
        <begin position="186"/>
        <end position="188"/>
    </location>
    <ligand>
        <name>ADP</name>
        <dbReference type="ChEBI" id="CHEBI:456216"/>
        <note>allosteric activator; ligand shared between dimeric partners</note>
    </ligand>
</feature>
<feature type="binding site" description="in other chain" evidence="1">
    <location>
        <begin position="214"/>
        <end position="216"/>
    </location>
    <ligand>
        <name>ADP</name>
        <dbReference type="ChEBI" id="CHEBI:456216"/>
        <note>allosteric activator; ligand shared between dimeric partners</note>
    </ligand>
</feature>
<feature type="binding site" description="in other chain" evidence="1">
    <location>
        <position position="223"/>
    </location>
    <ligand>
        <name>substrate</name>
        <note>ligand shared between dimeric partners</note>
    </ligand>
</feature>
<feature type="binding site" evidence="1">
    <location>
        <position position="244"/>
    </location>
    <ligand>
        <name>substrate</name>
        <note>ligand shared between dimeric partners</note>
    </ligand>
</feature>
<feature type="binding site" description="in other chain" evidence="1">
    <location>
        <begin position="250"/>
        <end position="253"/>
    </location>
    <ligand>
        <name>substrate</name>
        <note>ligand shared between dimeric partners</note>
    </ligand>
</feature>
<reference key="1">
    <citation type="journal article" date="2009" name="PLoS ONE">
        <title>The complete genome of Teredinibacter turnerae T7901: an intracellular endosymbiont of marine wood-boring bivalves (shipworms).</title>
        <authorList>
            <person name="Yang J.C."/>
            <person name="Madupu R."/>
            <person name="Durkin A.S."/>
            <person name="Ekborg N.A."/>
            <person name="Pedamallu C.S."/>
            <person name="Hostetler J.B."/>
            <person name="Radune D."/>
            <person name="Toms B.S."/>
            <person name="Henrissat B."/>
            <person name="Coutinho P.M."/>
            <person name="Schwarz S."/>
            <person name="Field L."/>
            <person name="Trindade-Silva A.E."/>
            <person name="Soares C.A.G."/>
            <person name="Elshahawi S."/>
            <person name="Hanora A."/>
            <person name="Schmidt E.W."/>
            <person name="Haygood M.G."/>
            <person name="Posfai J."/>
            <person name="Benner J."/>
            <person name="Madinger C."/>
            <person name="Nove J."/>
            <person name="Anton B."/>
            <person name="Chaudhary K."/>
            <person name="Foster J."/>
            <person name="Holman A."/>
            <person name="Kumar S."/>
            <person name="Lessard P.A."/>
            <person name="Luyten Y.A."/>
            <person name="Slatko B."/>
            <person name="Wood N."/>
            <person name="Wu B."/>
            <person name="Teplitski M."/>
            <person name="Mougous J.D."/>
            <person name="Ward N."/>
            <person name="Eisen J.A."/>
            <person name="Badger J.H."/>
            <person name="Distel D.L."/>
        </authorList>
    </citation>
    <scope>NUCLEOTIDE SEQUENCE [LARGE SCALE GENOMIC DNA]</scope>
    <source>
        <strain>ATCC 39867 / T7901</strain>
    </source>
</reference>
<evidence type="ECO:0000255" key="1">
    <source>
        <dbReference type="HAMAP-Rule" id="MF_00339"/>
    </source>
</evidence>
<name>PFKA_TERTT</name>
<gene>
    <name evidence="1" type="primary">pfkA</name>
    <name type="ordered locus">TERTU_0635</name>
</gene>
<comment type="function">
    <text evidence="1">Catalyzes the phosphorylation of D-fructose 6-phosphate to fructose 1,6-bisphosphate by ATP, the first committing step of glycolysis.</text>
</comment>
<comment type="catalytic activity">
    <reaction evidence="1">
        <text>beta-D-fructose 6-phosphate + ATP = beta-D-fructose 1,6-bisphosphate + ADP + H(+)</text>
        <dbReference type="Rhea" id="RHEA:16109"/>
        <dbReference type="ChEBI" id="CHEBI:15378"/>
        <dbReference type="ChEBI" id="CHEBI:30616"/>
        <dbReference type="ChEBI" id="CHEBI:32966"/>
        <dbReference type="ChEBI" id="CHEBI:57634"/>
        <dbReference type="ChEBI" id="CHEBI:456216"/>
        <dbReference type="EC" id="2.7.1.11"/>
    </reaction>
</comment>
<comment type="cofactor">
    <cofactor evidence="1">
        <name>Mg(2+)</name>
        <dbReference type="ChEBI" id="CHEBI:18420"/>
    </cofactor>
</comment>
<comment type="activity regulation">
    <text evidence="1">Allosterically activated by ADP and other diphosphonucleosides, and allosterically inhibited by phosphoenolpyruvate.</text>
</comment>
<comment type="pathway">
    <text evidence="1">Carbohydrate degradation; glycolysis; D-glyceraldehyde 3-phosphate and glycerone phosphate from D-glucose: step 3/4.</text>
</comment>
<comment type="subunit">
    <text evidence="1">Homotetramer.</text>
</comment>
<comment type="subcellular location">
    <subcellularLocation>
        <location evidence="1">Cytoplasm</location>
    </subcellularLocation>
</comment>
<comment type="similarity">
    <text evidence="1">Belongs to the phosphofructokinase type A (PFKA) family. ATP-dependent PFK group I subfamily. Prokaryotic clade 'B1' sub-subfamily.</text>
</comment>
<protein>
    <recommendedName>
        <fullName evidence="1">ATP-dependent 6-phosphofructokinase</fullName>
        <shortName evidence="1">ATP-PFK</shortName>
        <shortName evidence="1">Phosphofructokinase</shortName>
        <ecNumber evidence="1">2.7.1.11</ecNumber>
    </recommendedName>
    <alternativeName>
        <fullName evidence="1">Phosphohexokinase</fullName>
    </alternativeName>
</protein>
<organism>
    <name type="scientific">Teredinibacter turnerae (strain ATCC 39867 / T7901)</name>
    <dbReference type="NCBI Taxonomy" id="377629"/>
    <lineage>
        <taxon>Bacteria</taxon>
        <taxon>Pseudomonadati</taxon>
        <taxon>Pseudomonadota</taxon>
        <taxon>Gammaproteobacteria</taxon>
        <taxon>Cellvibrionales</taxon>
        <taxon>Cellvibrionaceae</taxon>
        <taxon>Teredinibacter</taxon>
    </lineage>
</organism>
<keyword id="KW-0021">Allosteric enzyme</keyword>
<keyword id="KW-0067">ATP-binding</keyword>
<keyword id="KW-0963">Cytoplasm</keyword>
<keyword id="KW-0324">Glycolysis</keyword>
<keyword id="KW-0418">Kinase</keyword>
<keyword id="KW-0460">Magnesium</keyword>
<keyword id="KW-0479">Metal-binding</keyword>
<keyword id="KW-0547">Nucleotide-binding</keyword>
<keyword id="KW-1185">Reference proteome</keyword>
<keyword id="KW-0808">Transferase</keyword>
<dbReference type="EC" id="2.7.1.11" evidence="1"/>
<dbReference type="EMBL" id="CP001614">
    <property type="protein sequence ID" value="ACR10961.1"/>
    <property type="molecule type" value="Genomic_DNA"/>
</dbReference>
<dbReference type="RefSeq" id="WP_015817073.1">
    <property type="nucleotide sequence ID" value="NC_012997.1"/>
</dbReference>
<dbReference type="SMR" id="C5BNR1"/>
<dbReference type="STRING" id="377629.TERTU_0635"/>
<dbReference type="KEGG" id="ttu:TERTU_0635"/>
<dbReference type="eggNOG" id="COG0205">
    <property type="taxonomic scope" value="Bacteria"/>
</dbReference>
<dbReference type="HOGENOM" id="CLU_020655_0_1_6"/>
<dbReference type="OrthoDB" id="9802503at2"/>
<dbReference type="UniPathway" id="UPA00109">
    <property type="reaction ID" value="UER00182"/>
</dbReference>
<dbReference type="Proteomes" id="UP000009080">
    <property type="component" value="Chromosome"/>
</dbReference>
<dbReference type="GO" id="GO:0005945">
    <property type="term" value="C:6-phosphofructokinase complex"/>
    <property type="evidence" value="ECO:0007669"/>
    <property type="project" value="TreeGrafter"/>
</dbReference>
<dbReference type="GO" id="GO:0003872">
    <property type="term" value="F:6-phosphofructokinase activity"/>
    <property type="evidence" value="ECO:0007669"/>
    <property type="project" value="UniProtKB-UniRule"/>
</dbReference>
<dbReference type="GO" id="GO:0016208">
    <property type="term" value="F:AMP binding"/>
    <property type="evidence" value="ECO:0007669"/>
    <property type="project" value="TreeGrafter"/>
</dbReference>
<dbReference type="GO" id="GO:0005524">
    <property type="term" value="F:ATP binding"/>
    <property type="evidence" value="ECO:0007669"/>
    <property type="project" value="UniProtKB-KW"/>
</dbReference>
<dbReference type="GO" id="GO:0070095">
    <property type="term" value="F:fructose-6-phosphate binding"/>
    <property type="evidence" value="ECO:0007669"/>
    <property type="project" value="TreeGrafter"/>
</dbReference>
<dbReference type="GO" id="GO:0042802">
    <property type="term" value="F:identical protein binding"/>
    <property type="evidence" value="ECO:0007669"/>
    <property type="project" value="TreeGrafter"/>
</dbReference>
<dbReference type="GO" id="GO:0046872">
    <property type="term" value="F:metal ion binding"/>
    <property type="evidence" value="ECO:0007669"/>
    <property type="project" value="UniProtKB-KW"/>
</dbReference>
<dbReference type="GO" id="GO:0048029">
    <property type="term" value="F:monosaccharide binding"/>
    <property type="evidence" value="ECO:0007669"/>
    <property type="project" value="TreeGrafter"/>
</dbReference>
<dbReference type="GO" id="GO:0061621">
    <property type="term" value="P:canonical glycolysis"/>
    <property type="evidence" value="ECO:0007669"/>
    <property type="project" value="TreeGrafter"/>
</dbReference>
<dbReference type="GO" id="GO:0030388">
    <property type="term" value="P:fructose 1,6-bisphosphate metabolic process"/>
    <property type="evidence" value="ECO:0007669"/>
    <property type="project" value="TreeGrafter"/>
</dbReference>
<dbReference type="GO" id="GO:0006002">
    <property type="term" value="P:fructose 6-phosphate metabolic process"/>
    <property type="evidence" value="ECO:0007669"/>
    <property type="project" value="InterPro"/>
</dbReference>
<dbReference type="CDD" id="cd00763">
    <property type="entry name" value="Bacterial_PFK"/>
    <property type="match status" value="1"/>
</dbReference>
<dbReference type="FunFam" id="3.40.50.450:FF:000001">
    <property type="entry name" value="ATP-dependent 6-phosphofructokinase"/>
    <property type="match status" value="1"/>
</dbReference>
<dbReference type="FunFam" id="3.40.50.460:FF:000002">
    <property type="entry name" value="ATP-dependent 6-phosphofructokinase"/>
    <property type="match status" value="1"/>
</dbReference>
<dbReference type="Gene3D" id="3.40.50.450">
    <property type="match status" value="1"/>
</dbReference>
<dbReference type="Gene3D" id="3.40.50.460">
    <property type="entry name" value="Phosphofructokinase domain"/>
    <property type="match status" value="1"/>
</dbReference>
<dbReference type="HAMAP" id="MF_00339">
    <property type="entry name" value="Phosphofructokinase_I_B1"/>
    <property type="match status" value="1"/>
</dbReference>
<dbReference type="InterPro" id="IPR022953">
    <property type="entry name" value="ATP_PFK"/>
</dbReference>
<dbReference type="InterPro" id="IPR012003">
    <property type="entry name" value="ATP_PFK_prok-type"/>
</dbReference>
<dbReference type="InterPro" id="IPR012828">
    <property type="entry name" value="PFKA_ATP_prok"/>
</dbReference>
<dbReference type="InterPro" id="IPR015912">
    <property type="entry name" value="Phosphofructokinase_CS"/>
</dbReference>
<dbReference type="InterPro" id="IPR000023">
    <property type="entry name" value="Phosphofructokinase_dom"/>
</dbReference>
<dbReference type="InterPro" id="IPR035966">
    <property type="entry name" value="PKF_sf"/>
</dbReference>
<dbReference type="NCBIfam" id="TIGR02482">
    <property type="entry name" value="PFKA_ATP"/>
    <property type="match status" value="1"/>
</dbReference>
<dbReference type="NCBIfam" id="NF002872">
    <property type="entry name" value="PRK03202.1"/>
    <property type="match status" value="1"/>
</dbReference>
<dbReference type="PANTHER" id="PTHR13697:SF4">
    <property type="entry name" value="ATP-DEPENDENT 6-PHOSPHOFRUCTOKINASE"/>
    <property type="match status" value="1"/>
</dbReference>
<dbReference type="PANTHER" id="PTHR13697">
    <property type="entry name" value="PHOSPHOFRUCTOKINASE"/>
    <property type="match status" value="1"/>
</dbReference>
<dbReference type="Pfam" id="PF00365">
    <property type="entry name" value="PFK"/>
    <property type="match status" value="1"/>
</dbReference>
<dbReference type="PIRSF" id="PIRSF000532">
    <property type="entry name" value="ATP_PFK_prok"/>
    <property type="match status" value="1"/>
</dbReference>
<dbReference type="PRINTS" id="PR00476">
    <property type="entry name" value="PHFRCTKINASE"/>
</dbReference>
<dbReference type="SUPFAM" id="SSF53784">
    <property type="entry name" value="Phosphofructokinase"/>
    <property type="match status" value="1"/>
</dbReference>
<dbReference type="PROSITE" id="PS00433">
    <property type="entry name" value="PHOSPHOFRUCTOKINASE"/>
    <property type="match status" value="1"/>
</dbReference>
<sequence>MVKNIGVLTSGGDAPGMNAAVRAVVRTALHYDVGVYGIYNGYLGLYRNEIQPMTRRSVADTINRGGTFLGSARFPEFKEEAVREEAIKNLRKHEIDALVVVGGDGSYMGAKKLTEMGFPCIGLPGTIDNDVAGTDYTIGYFTALNTVLDALDRLRDTSSSHKRISVVEIMGRHCGDLTVWSAIGSGAEYAIVPEMPFDEDKFLEQLRDQVGHGKNHAIVCITEKITDVNRLAKRIEQETGLETRATVLGHIQRGGAPTAFDRILASRMGAYAVELLRQGYGGRCVGIQANELVHHDIIDALENMSRPFKDCLLDLAHRLA</sequence>
<proteinExistence type="inferred from homology"/>
<accession>C5BNR1</accession>